<name>PY2CR_AZOBR</name>
<gene>
    <name evidence="2" type="primary">lhpI</name>
</gene>
<keyword id="KW-0520">NAD</keyword>
<keyword id="KW-0521">NADP</keyword>
<keyword id="KW-0560">Oxidoreductase</keyword>
<comment type="function">
    <text evidence="1">Catalyzes the reduction of both Delta(1)-pyrroline-2-carboxylate (Pyr2C) and Delta(1)-piperideine-2-carboxylate (Pip2C) to L-proline and L-pipecolate, respectively, using NADPH or NADH as the electron donor. Can also catalyze the reverse oxidation reactions, albeit at a much lower rate. Together with LhpH, is involved in a trans-3-hydroxy-L-proline (t3LHyp) degradation pathway to L-proline, which allows A.brasilense to grow on t3LHyp as a sole carbon source. Also appears to be involved in D-proline and D-lysine metabolism. Does not show ornithine cyclodeaminase (OCD) activity.</text>
</comment>
<comment type="catalytic activity">
    <reaction evidence="1">
        <text>L-pipecolate + NAD(+) = Delta(1)-piperideine-2-carboxylate + NADH + H(+)</text>
        <dbReference type="Rhea" id="RHEA:30807"/>
        <dbReference type="ChEBI" id="CHEBI:15378"/>
        <dbReference type="ChEBI" id="CHEBI:57540"/>
        <dbReference type="ChEBI" id="CHEBI:57945"/>
        <dbReference type="ChEBI" id="CHEBI:61185"/>
        <dbReference type="ChEBI" id="CHEBI:77631"/>
        <dbReference type="EC" id="1.5.1.1"/>
    </reaction>
</comment>
<comment type="catalytic activity">
    <reaction evidence="1">
        <text>L-pipecolate + NADP(+) = Delta(1)-piperideine-2-carboxylate + NADPH + H(+)</text>
        <dbReference type="Rhea" id="RHEA:12524"/>
        <dbReference type="ChEBI" id="CHEBI:15378"/>
        <dbReference type="ChEBI" id="CHEBI:57783"/>
        <dbReference type="ChEBI" id="CHEBI:58349"/>
        <dbReference type="ChEBI" id="CHEBI:61185"/>
        <dbReference type="ChEBI" id="CHEBI:77631"/>
        <dbReference type="EC" id="1.5.1.1"/>
    </reaction>
</comment>
<comment type="catalytic activity">
    <reaction evidence="1">
        <text>L-proline + NAD(+) = 1-pyrroline-2-carboxylate + NADH + H(+)</text>
        <dbReference type="Rhea" id="RHEA:20321"/>
        <dbReference type="ChEBI" id="CHEBI:15378"/>
        <dbReference type="ChEBI" id="CHEBI:39785"/>
        <dbReference type="ChEBI" id="CHEBI:57540"/>
        <dbReference type="ChEBI" id="CHEBI:57945"/>
        <dbReference type="ChEBI" id="CHEBI:60039"/>
        <dbReference type="EC" id="1.5.1.1"/>
    </reaction>
</comment>
<comment type="catalytic activity">
    <reaction evidence="1">
        <text>L-proline + NADP(+) = 1-pyrroline-2-carboxylate + NADPH + H(+)</text>
        <dbReference type="Rhea" id="RHEA:20317"/>
        <dbReference type="ChEBI" id="CHEBI:15378"/>
        <dbReference type="ChEBI" id="CHEBI:39785"/>
        <dbReference type="ChEBI" id="CHEBI:57783"/>
        <dbReference type="ChEBI" id="CHEBI:58349"/>
        <dbReference type="ChEBI" id="CHEBI:60039"/>
        <dbReference type="EC" id="1.5.1.1"/>
    </reaction>
</comment>
<comment type="biophysicochemical properties">
    <kinetics>
        <KM evidence="1">0.628 mM for Delta(1)-pyrroline-2-carboxylate (using NADPH, at pH 6.5)</KM>
        <KM evidence="1">0.837 mM for Delta(1)-pyrroline-2-carboxylate (using NADH, at pH 6.5)</KM>
        <KM evidence="1">0.474 mM for Delta(1)-piperideine-2-carboxylate (using NADPH, at pH 6.5)</KM>
        <KM evidence="1">0.6 mM for Delta(1)-piperideine-2-carboxylate (using NADH, at pH 6.5)</KM>
        <KM evidence="1">0.491 mM for Delta(1)-pyrroline-(4S)-hydroxy-2-carboxylate (using NADPH, at pH 6.5)</KM>
        <KM evidence="1">3.63 mM for L-proline (using NADP(+), at pH 10.5)</KM>
        <KM evidence="1">3.99 mM for L-proline (using NAD(+), at pH 10.5)</KM>
        <KM evidence="1">6.54 mM for L-pipecolate (using NADP(+), at pH 10.5)</KM>
        <KM evidence="1">14.8 mM for L-pipecolate (using NAD(+), at pH 10.5)</KM>
        <text evidence="1">kcat is 31400 min(-1) for Pyr2C reduction using NADPH. kcat is 36900 min(-1) for Pyr2C reduction using NADH. kcat is 9950 min(-1) for Pip2C reduction using NADPH. kcat is 9690 min(-1) for Pip2C reduction using NADH. kcat is 621 min(-1) for Delta(1)-pyrroline-(4S)-hydroxy-2-carboxylate (Pyr4SH2C) reduction using NADPH. kcat is 235 min(-1) for L-proline oxidation using NADP(+). kcat is 254 min(-1) for L-proline oxidation using NAD(+). kcat is 150 min(-1) for L-pipecolate oxidation using NADP(+). kcat is 222 min(-1) for L-pipecolate oxidation using NAD(+).</text>
    </kinetics>
    <phDependence>
        <text evidence="1">Optimum pH is 6.5 for Pyr2C reduction and 10.5 for L-proline oxidation.</text>
    </phDependence>
</comment>
<comment type="pathway">
    <text evidence="1">Amino-acid degradation.</text>
</comment>
<comment type="subunit">
    <text evidence="1">Homodimer.</text>
</comment>
<comment type="induction">
    <text evidence="1">Induced by trans-3-hydroxy-L-proline (T3LHyp), D-proline and D-lysine, but not by trans-4-hydroxy-L-proline (T4LHyp) and by cis-4-hydroxy-D-proline (C4DHyp).</text>
</comment>
<comment type="disruption phenotype">
    <text>Disruption of this gene leads to loss of growth on T3LHyp, D-proline and D-lysine as a sole carbon source, indicating that this gene has dual metabolic functions as a reductase for Pyr2C and Pip2C in these pathways. On the other hand, there is no difference in growth on other carbon sources, including T4LHyp, between the wild-type and mutant strains.</text>
</comment>
<comment type="similarity">
    <text evidence="3">Belongs to the ornithine cyclodeaminase/mu-crystallin family.</text>
</comment>
<evidence type="ECO:0000269" key="1">
    <source>
    </source>
</evidence>
<evidence type="ECO:0000303" key="2">
    <source>
    </source>
</evidence>
<evidence type="ECO:0000305" key="3">
    <source>
    </source>
</evidence>
<feature type="chain" id="PRO_0000432295" description="Delta(1)-pyrroline-2-carboxylate/Delta(1)-piperideine-2-carboxylate reductase">
    <location>
        <begin position="1"/>
        <end position="311"/>
    </location>
</feature>
<sequence length="311" mass="31831">MTALSPIPVFDAADTAALLAYPALLATLGQAVADYAAGEIVSPERLVVPLQAGGVMLSMPSSARDLATHKLVNVCPGNGARGLPTILGQVTAYDASTGEMRFALDGPTVTGRRTAAVTALGIQALHGAAPRDILLIGTGKQAANHAEALAAIFPEARLHVRGTSADSAAAFCAAHRAQAPRLVPLDGDAIPDAIDVVVTLTTSRTPVYREAAREGRLVVGVGAFTADAAEIDANTVRASRLVVDDPAGARHEAGDLIVAQVDWQHVASLADVLGGTFDRSGPLLFKSVGCAAWDLAACRTARDALAARRAG</sequence>
<accession>V5YW53</accession>
<reference key="1">
    <citation type="journal article" date="2014" name="FEBS Open Bio">
        <title>Identification and characterization of trans-3-hydroxy-L-proline dehydratase and Delta(1)-pyrroline-2-carboxylate reductase involved in trans-3-hydroxy-L-proline metabolism of bacteria.</title>
        <authorList>
            <person name="Watanabe S."/>
            <person name="Tanimoto Y."/>
            <person name="Yamauchi S."/>
            <person name="Tozawa Y."/>
            <person name="Sawayama S."/>
            <person name="Watanabe Y."/>
        </authorList>
    </citation>
    <scope>NUCLEOTIDE SEQUENCE [GENOMIC DNA]</scope>
    <scope>FUNCTION</scope>
    <scope>CATALYTIC ACTIVITY</scope>
    <scope>SUBUNIT</scope>
    <scope>BIOPHYSICOCHEMICAL PROPERTIES</scope>
    <scope>INDUCTION</scope>
    <scope>DISRUPTION PHENOTYPE</scope>
    <scope>PATHWAY</scope>
    <source>
        <strain>ATCC 29145 / DSM 1690 / IMET 11303 / Sp7</strain>
    </source>
</reference>
<organism>
    <name type="scientific">Azospirillum brasilense</name>
    <dbReference type="NCBI Taxonomy" id="192"/>
    <lineage>
        <taxon>Bacteria</taxon>
        <taxon>Pseudomonadati</taxon>
        <taxon>Pseudomonadota</taxon>
        <taxon>Alphaproteobacteria</taxon>
        <taxon>Rhodospirillales</taxon>
        <taxon>Azospirillaceae</taxon>
        <taxon>Azospirillum</taxon>
    </lineage>
</organism>
<proteinExistence type="evidence at protein level"/>
<dbReference type="EC" id="1.5.1.1" evidence="1"/>
<dbReference type="EMBL" id="AB894495">
    <property type="protein sequence ID" value="BAO21622.1"/>
    <property type="molecule type" value="Genomic_DNA"/>
</dbReference>
<dbReference type="SMR" id="V5YW53"/>
<dbReference type="BioCyc" id="MetaCyc:MONOMER-18703"/>
<dbReference type="BRENDA" id="1.5.1.1">
    <property type="organism ID" value="611"/>
</dbReference>
<dbReference type="SABIO-RK" id="V5YW53"/>
<dbReference type="GO" id="GO:0005737">
    <property type="term" value="C:cytoplasm"/>
    <property type="evidence" value="ECO:0007669"/>
    <property type="project" value="TreeGrafter"/>
</dbReference>
<dbReference type="GO" id="GO:0047125">
    <property type="term" value="F:delta1-piperideine-2-carboxylate reductase activity"/>
    <property type="evidence" value="ECO:0007669"/>
    <property type="project" value="RHEA"/>
</dbReference>
<dbReference type="GO" id="GO:0042562">
    <property type="term" value="F:hormone binding"/>
    <property type="evidence" value="ECO:0007669"/>
    <property type="project" value="TreeGrafter"/>
</dbReference>
<dbReference type="GO" id="GO:0050241">
    <property type="term" value="F:pyrroline-2-carboxylate reductase activity"/>
    <property type="evidence" value="ECO:0007669"/>
    <property type="project" value="UniProtKB-EC"/>
</dbReference>
<dbReference type="Gene3D" id="3.40.50.720">
    <property type="entry name" value="NAD(P)-binding Rossmann-like Domain"/>
    <property type="match status" value="1"/>
</dbReference>
<dbReference type="Gene3D" id="3.30.1780.10">
    <property type="entry name" value="ornithine cyclodeaminase, domain 1"/>
    <property type="match status" value="1"/>
</dbReference>
<dbReference type="InterPro" id="IPR036291">
    <property type="entry name" value="NAD(P)-bd_dom_sf"/>
</dbReference>
<dbReference type="InterPro" id="IPR003462">
    <property type="entry name" value="ODC_Mu_crystall"/>
</dbReference>
<dbReference type="InterPro" id="IPR023401">
    <property type="entry name" value="ODC_N"/>
</dbReference>
<dbReference type="InterPro" id="IPR053444">
    <property type="entry name" value="Pyr2C_reductase-like"/>
</dbReference>
<dbReference type="NCBIfam" id="NF005603">
    <property type="entry name" value="PRK07340.1"/>
    <property type="match status" value="1"/>
</dbReference>
<dbReference type="NCBIfam" id="NF045512">
    <property type="entry name" value="PyrPipCarbRedLhpI"/>
    <property type="match status" value="1"/>
</dbReference>
<dbReference type="PANTHER" id="PTHR13812">
    <property type="entry name" value="KETIMINE REDUCTASE MU-CRYSTALLIN"/>
    <property type="match status" value="1"/>
</dbReference>
<dbReference type="PANTHER" id="PTHR13812:SF19">
    <property type="entry name" value="KETIMINE REDUCTASE MU-CRYSTALLIN"/>
    <property type="match status" value="1"/>
</dbReference>
<dbReference type="Pfam" id="PF02423">
    <property type="entry name" value="OCD_Mu_crystall"/>
    <property type="match status" value="1"/>
</dbReference>
<dbReference type="PIRSF" id="PIRSF001439">
    <property type="entry name" value="CryM"/>
    <property type="match status" value="1"/>
</dbReference>
<dbReference type="SUPFAM" id="SSF51735">
    <property type="entry name" value="NAD(P)-binding Rossmann-fold domains"/>
    <property type="match status" value="1"/>
</dbReference>
<protein>
    <recommendedName>
        <fullName evidence="2">Delta(1)-pyrroline-2-carboxylate/Delta(1)-piperideine-2-carboxylate reductase</fullName>
        <shortName evidence="2">Pyr2C/Pip2C reductase</shortName>
        <ecNumber evidence="1">1.5.1.1</ecNumber>
    </recommendedName>
</protein>